<keyword id="KW-0963">Cytoplasm</keyword>
<keyword id="KW-0413">Isomerase</keyword>
<keyword id="KW-0464">Manganese</keyword>
<keyword id="KW-0479">Metal-binding</keyword>
<reference key="1">
    <citation type="journal article" date="2002" name="Lancet">
        <title>Genome and virulence determinants of high virulence community-acquired MRSA.</title>
        <authorList>
            <person name="Baba T."/>
            <person name="Takeuchi F."/>
            <person name="Kuroda M."/>
            <person name="Yuzawa H."/>
            <person name="Aoki K."/>
            <person name="Oguchi A."/>
            <person name="Nagai Y."/>
            <person name="Iwama N."/>
            <person name="Asano K."/>
            <person name="Naimi T."/>
            <person name="Kuroda H."/>
            <person name="Cui L."/>
            <person name="Yamamoto K."/>
            <person name="Hiramatsu K."/>
        </authorList>
    </citation>
    <scope>NUCLEOTIDE SEQUENCE [LARGE SCALE GENOMIC DNA]</scope>
    <source>
        <strain>MW2</strain>
    </source>
</reference>
<evidence type="ECO:0000255" key="1">
    <source>
        <dbReference type="HAMAP-Rule" id="MF_00740"/>
    </source>
</evidence>
<dbReference type="EC" id="5.4.2.7" evidence="1"/>
<dbReference type="EMBL" id="BA000033">
    <property type="protein sequence ID" value="BAB93978.1"/>
    <property type="molecule type" value="Genomic_DNA"/>
</dbReference>
<dbReference type="RefSeq" id="WP_000197806.1">
    <property type="nucleotide sequence ID" value="NC_003923.1"/>
</dbReference>
<dbReference type="SMR" id="P63926"/>
<dbReference type="KEGG" id="sam:MW0113"/>
<dbReference type="HOGENOM" id="CLU_053861_0_0_9"/>
<dbReference type="UniPathway" id="UPA00002">
    <property type="reaction ID" value="UER00467"/>
</dbReference>
<dbReference type="GO" id="GO:0005829">
    <property type="term" value="C:cytosol"/>
    <property type="evidence" value="ECO:0007669"/>
    <property type="project" value="TreeGrafter"/>
</dbReference>
<dbReference type="GO" id="GO:0000287">
    <property type="term" value="F:magnesium ion binding"/>
    <property type="evidence" value="ECO:0007669"/>
    <property type="project" value="InterPro"/>
</dbReference>
<dbReference type="GO" id="GO:0030145">
    <property type="term" value="F:manganese ion binding"/>
    <property type="evidence" value="ECO:0007669"/>
    <property type="project" value="UniProtKB-UniRule"/>
</dbReference>
<dbReference type="GO" id="GO:0008973">
    <property type="term" value="F:phosphopentomutase activity"/>
    <property type="evidence" value="ECO:0007669"/>
    <property type="project" value="UniProtKB-UniRule"/>
</dbReference>
<dbReference type="GO" id="GO:0006018">
    <property type="term" value="P:2-deoxyribose 1-phosphate catabolic process"/>
    <property type="evidence" value="ECO:0007669"/>
    <property type="project" value="UniProtKB-UniRule"/>
</dbReference>
<dbReference type="GO" id="GO:0006015">
    <property type="term" value="P:5-phosphoribose 1-diphosphate biosynthetic process"/>
    <property type="evidence" value="ECO:0007669"/>
    <property type="project" value="UniProtKB-UniPathway"/>
</dbReference>
<dbReference type="GO" id="GO:0043094">
    <property type="term" value="P:metabolic compound salvage"/>
    <property type="evidence" value="ECO:0007669"/>
    <property type="project" value="InterPro"/>
</dbReference>
<dbReference type="GO" id="GO:0009117">
    <property type="term" value="P:nucleotide metabolic process"/>
    <property type="evidence" value="ECO:0007669"/>
    <property type="project" value="InterPro"/>
</dbReference>
<dbReference type="CDD" id="cd16009">
    <property type="entry name" value="PPM"/>
    <property type="match status" value="1"/>
</dbReference>
<dbReference type="FunFam" id="3.30.70.1250:FF:000001">
    <property type="entry name" value="Phosphopentomutase"/>
    <property type="match status" value="1"/>
</dbReference>
<dbReference type="Gene3D" id="3.40.720.10">
    <property type="entry name" value="Alkaline Phosphatase, subunit A"/>
    <property type="match status" value="1"/>
</dbReference>
<dbReference type="Gene3D" id="3.30.70.1250">
    <property type="entry name" value="Phosphopentomutase"/>
    <property type="match status" value="1"/>
</dbReference>
<dbReference type="HAMAP" id="MF_00740">
    <property type="entry name" value="Phosphopentomut"/>
    <property type="match status" value="1"/>
</dbReference>
<dbReference type="InterPro" id="IPR017850">
    <property type="entry name" value="Alkaline_phosphatase_core_sf"/>
</dbReference>
<dbReference type="InterPro" id="IPR010045">
    <property type="entry name" value="DeoB"/>
</dbReference>
<dbReference type="InterPro" id="IPR006124">
    <property type="entry name" value="Metalloenzyme"/>
</dbReference>
<dbReference type="InterPro" id="IPR024052">
    <property type="entry name" value="Phosphopentomutase_DeoB_cap_sf"/>
</dbReference>
<dbReference type="NCBIfam" id="TIGR01696">
    <property type="entry name" value="deoB"/>
    <property type="match status" value="1"/>
</dbReference>
<dbReference type="NCBIfam" id="NF003766">
    <property type="entry name" value="PRK05362.1"/>
    <property type="match status" value="1"/>
</dbReference>
<dbReference type="PANTHER" id="PTHR21110">
    <property type="entry name" value="PHOSPHOPENTOMUTASE"/>
    <property type="match status" value="1"/>
</dbReference>
<dbReference type="PANTHER" id="PTHR21110:SF0">
    <property type="entry name" value="PHOSPHOPENTOMUTASE"/>
    <property type="match status" value="1"/>
</dbReference>
<dbReference type="Pfam" id="PF01676">
    <property type="entry name" value="Metalloenzyme"/>
    <property type="match status" value="1"/>
</dbReference>
<dbReference type="PIRSF" id="PIRSF001491">
    <property type="entry name" value="Ppentomutase"/>
    <property type="match status" value="1"/>
</dbReference>
<dbReference type="SUPFAM" id="SSF53649">
    <property type="entry name" value="Alkaline phosphatase-like"/>
    <property type="match status" value="1"/>
</dbReference>
<dbReference type="SUPFAM" id="SSF143856">
    <property type="entry name" value="DeoB insert domain-like"/>
    <property type="match status" value="1"/>
</dbReference>
<proteinExistence type="inferred from homology"/>
<name>DEOB_STAAW</name>
<gene>
    <name evidence="1" type="primary">deoB</name>
    <name type="synonym">drm</name>
    <name type="ordered locus">MW0113</name>
</gene>
<organism>
    <name type="scientific">Staphylococcus aureus (strain MW2)</name>
    <dbReference type="NCBI Taxonomy" id="196620"/>
    <lineage>
        <taxon>Bacteria</taxon>
        <taxon>Bacillati</taxon>
        <taxon>Bacillota</taxon>
        <taxon>Bacilli</taxon>
        <taxon>Bacillales</taxon>
        <taxon>Staphylococcaceae</taxon>
        <taxon>Staphylococcus</taxon>
    </lineage>
</organism>
<comment type="function">
    <text evidence="1">Isomerase that catalyzes the conversion of deoxy-ribose 1-phosphate (dRib-1-P) and ribose 1-phosphate (Rib-1-P) to deoxy-ribose 5-phosphate (dRib-5-P) and ribose 5-phosphate (Rib-5-P), respectively.</text>
</comment>
<comment type="catalytic activity">
    <reaction evidence="1">
        <text>2-deoxy-alpha-D-ribose 1-phosphate = 2-deoxy-D-ribose 5-phosphate</text>
        <dbReference type="Rhea" id="RHEA:27658"/>
        <dbReference type="ChEBI" id="CHEBI:57259"/>
        <dbReference type="ChEBI" id="CHEBI:62877"/>
        <dbReference type="EC" id="5.4.2.7"/>
    </reaction>
</comment>
<comment type="catalytic activity">
    <reaction evidence="1">
        <text>alpha-D-ribose 1-phosphate = D-ribose 5-phosphate</text>
        <dbReference type="Rhea" id="RHEA:18793"/>
        <dbReference type="ChEBI" id="CHEBI:57720"/>
        <dbReference type="ChEBI" id="CHEBI:78346"/>
        <dbReference type="EC" id="5.4.2.7"/>
    </reaction>
</comment>
<comment type="cofactor">
    <cofactor evidence="1">
        <name>Mn(2+)</name>
        <dbReference type="ChEBI" id="CHEBI:29035"/>
    </cofactor>
    <text evidence="1">Binds 2 manganese ions.</text>
</comment>
<comment type="pathway">
    <text evidence="1">Carbohydrate degradation; 2-deoxy-D-ribose 1-phosphate degradation; D-glyceraldehyde 3-phosphate and acetaldehyde from 2-deoxy-alpha-D-ribose 1-phosphate: step 1/2.</text>
</comment>
<comment type="subcellular location">
    <subcellularLocation>
        <location evidence="1">Cytoplasm</location>
    </subcellularLocation>
</comment>
<comment type="similarity">
    <text evidence="1">Belongs to the phosphopentomutase family.</text>
</comment>
<protein>
    <recommendedName>
        <fullName evidence="1">Phosphopentomutase</fullName>
        <ecNumber evidence="1">5.4.2.7</ecNumber>
    </recommendedName>
    <alternativeName>
        <fullName evidence="1">Phosphodeoxyribomutase</fullName>
    </alternativeName>
</protein>
<accession>P63926</accession>
<accession>Q99X76</accession>
<feature type="chain" id="PRO_0000199844" description="Phosphopentomutase">
    <location>
        <begin position="1"/>
        <end position="392"/>
    </location>
</feature>
<feature type="binding site" evidence="1">
    <location>
        <position position="14"/>
    </location>
    <ligand>
        <name>Mn(2+)</name>
        <dbReference type="ChEBI" id="CHEBI:29035"/>
        <label>1</label>
    </ligand>
</feature>
<feature type="binding site" evidence="1">
    <location>
        <position position="286"/>
    </location>
    <ligand>
        <name>Mn(2+)</name>
        <dbReference type="ChEBI" id="CHEBI:29035"/>
        <label>2</label>
    </ligand>
</feature>
<feature type="binding site" evidence="1">
    <location>
        <position position="291"/>
    </location>
    <ligand>
        <name>Mn(2+)</name>
        <dbReference type="ChEBI" id="CHEBI:29035"/>
        <label>2</label>
    </ligand>
</feature>
<feature type="binding site" evidence="1">
    <location>
        <position position="327"/>
    </location>
    <ligand>
        <name>Mn(2+)</name>
        <dbReference type="ChEBI" id="CHEBI:29035"/>
        <label>1</label>
    </ligand>
</feature>
<feature type="binding site" evidence="1">
    <location>
        <position position="328"/>
    </location>
    <ligand>
        <name>Mn(2+)</name>
        <dbReference type="ChEBI" id="CHEBI:29035"/>
        <label>1</label>
    </ligand>
</feature>
<feature type="binding site" evidence="1">
    <location>
        <position position="339"/>
    </location>
    <ligand>
        <name>Mn(2+)</name>
        <dbReference type="ChEBI" id="CHEBI:29035"/>
        <label>2</label>
    </ligand>
</feature>
<sequence length="392" mass="43796">MTRPFNRVHLIVMDSVGIGEAPDAADFKDEGSHTLRHTLEGFDQTLPNLEKLGLGNIDKLPVVNAVEQPEAYYTKLSEASVGKDTMTGHWEIMGLNIMQPFKVYPNGFPEELIQQIEEMTGRKVVANKPASGTQIIDEWGEHQMKTGDLIVYTSADPVLQIAAHEDIIPLEELYDICEKVRELTKDPKYLIGRIIARPYVGEPGNFTRTSNRHDYALKPFGKTVLDHLKDGGYDVIAIGKINDIYDGEGVTEAVRTKSNMDGMDQLMKIVKKDFTGISFLNLVDFDALYGHRRDKPGYAQAIKDFDDRLPELFSNLKEDDLVIITADHGNDPTAPGTDHTREYIPVIMYSPKFKGGHALESDTTFSSIGATIADNFNVTLPEFGKSYLKELK</sequence>